<gene>
    <name type="primary">MPS1</name>
    <name type="synonym">RPK1</name>
    <name type="ordered locus">YDL028C</name>
    <name type="ORF">D2785</name>
</gene>
<keyword id="KW-0002">3D-structure</keyword>
<keyword id="KW-0067">ATP-binding</keyword>
<keyword id="KW-0418">Kinase</keyword>
<keyword id="KW-0547">Nucleotide-binding</keyword>
<keyword id="KW-0597">Phosphoprotein</keyword>
<keyword id="KW-1185">Reference proteome</keyword>
<keyword id="KW-0723">Serine/threonine-protein kinase</keyword>
<keyword id="KW-0808">Transferase</keyword>
<proteinExistence type="evidence at protein level"/>
<protein>
    <recommendedName>
        <fullName>Serine/threonine-protein kinase MPS1</fullName>
        <ecNumber evidence="5 6 7 8">2.7.12.2</ecNumber>
    </recommendedName>
    <alternativeName>
        <fullName>Monopolar spindle protein 1</fullName>
    </alternativeName>
    <alternativeName>
        <fullName>Regulatory cell proliferation kinase 1</fullName>
    </alternativeName>
</protein>
<evidence type="ECO:0000250" key="1">
    <source>
        <dbReference type="UniProtKB" id="O94235"/>
    </source>
</evidence>
<evidence type="ECO:0000255" key="2">
    <source>
        <dbReference type="PROSITE-ProRule" id="PRU00159"/>
    </source>
</evidence>
<evidence type="ECO:0000255" key="3">
    <source>
        <dbReference type="PROSITE-ProRule" id="PRU10027"/>
    </source>
</evidence>
<evidence type="ECO:0000256" key="4">
    <source>
        <dbReference type="SAM" id="MobiDB-lite"/>
    </source>
</evidence>
<evidence type="ECO:0000269" key="5">
    <source>
    </source>
</evidence>
<evidence type="ECO:0000269" key="6">
    <source>
    </source>
</evidence>
<evidence type="ECO:0000269" key="7">
    <source>
    </source>
</evidence>
<evidence type="ECO:0000269" key="8">
    <source>
    </source>
</evidence>
<evidence type="ECO:0000269" key="9">
    <source>
    </source>
</evidence>
<evidence type="ECO:0000305" key="10"/>
<evidence type="ECO:0007829" key="11">
    <source>
        <dbReference type="PDB" id="8V10"/>
    </source>
</evidence>
<reference key="1">
    <citation type="journal article" date="1994" name="Mol. Gen. Genet.">
        <title>RPK1, an essential yeast protein kinase involved in the regulation of the onset of mitosis, shows homology to mammalian dual-specificity kinases.</title>
        <authorList>
            <person name="Poch O."/>
            <person name="Schwob E."/>
            <person name="de Fraipont F."/>
            <person name="Camasses A."/>
            <person name="Bordonne R."/>
            <person name="Martin R.P."/>
        </authorList>
    </citation>
    <scope>NUCLEOTIDE SEQUENCE [GENOMIC DNA]</scope>
    <source>
        <strain>ATCC 28383 / FL100 / VTT C-80102</strain>
    </source>
</reference>
<reference key="2">
    <citation type="journal article" date="1997" name="Yeast">
        <title>The sequence of a 36.7 kb segment on the left arm of chromosome IV from Saccharomyces cerevisiae reveals 20 non-overlapping open reading frames (ORFs) including SIT4, FAD1, NAM1, RNA11, SIR2, NAT1, PRP9, ACT2 and MPS1 and 11 new ORFs.</title>
        <authorList>
            <person name="Saren A.-M."/>
            <person name="Laamanen P."/>
            <person name="Lejarcegui J.B."/>
            <person name="Paulin L."/>
        </authorList>
    </citation>
    <scope>NUCLEOTIDE SEQUENCE [GENOMIC DNA]</scope>
    <source>
        <strain>ATCC 204508 / S288c</strain>
    </source>
</reference>
<reference key="3">
    <citation type="journal article" date="1997" name="Nature">
        <title>The nucleotide sequence of Saccharomyces cerevisiae chromosome IV.</title>
        <authorList>
            <person name="Jacq C."/>
            <person name="Alt-Moerbe J."/>
            <person name="Andre B."/>
            <person name="Arnold W."/>
            <person name="Bahr A."/>
            <person name="Ballesta J.P.G."/>
            <person name="Bargues M."/>
            <person name="Baron L."/>
            <person name="Becker A."/>
            <person name="Biteau N."/>
            <person name="Bloecker H."/>
            <person name="Blugeon C."/>
            <person name="Boskovic J."/>
            <person name="Brandt P."/>
            <person name="Brueckner M."/>
            <person name="Buitrago M.J."/>
            <person name="Coster F."/>
            <person name="Delaveau T."/>
            <person name="del Rey F."/>
            <person name="Dujon B."/>
            <person name="Eide L.G."/>
            <person name="Garcia-Cantalejo J.M."/>
            <person name="Goffeau A."/>
            <person name="Gomez-Peris A."/>
            <person name="Granotier C."/>
            <person name="Hanemann V."/>
            <person name="Hankeln T."/>
            <person name="Hoheisel J.D."/>
            <person name="Jaeger W."/>
            <person name="Jimenez A."/>
            <person name="Jonniaux J.-L."/>
            <person name="Kraemer C."/>
            <person name="Kuester H."/>
            <person name="Laamanen P."/>
            <person name="Legros Y."/>
            <person name="Louis E.J."/>
            <person name="Moeller-Rieker S."/>
            <person name="Monnet A."/>
            <person name="Moro M."/>
            <person name="Mueller-Auer S."/>
            <person name="Nussbaumer B."/>
            <person name="Paricio N."/>
            <person name="Paulin L."/>
            <person name="Perea J."/>
            <person name="Perez-Alonso M."/>
            <person name="Perez-Ortin J.E."/>
            <person name="Pohl T.M."/>
            <person name="Prydz H."/>
            <person name="Purnelle B."/>
            <person name="Rasmussen S.W."/>
            <person name="Remacha M.A."/>
            <person name="Revuelta J.L."/>
            <person name="Rieger M."/>
            <person name="Salom D."/>
            <person name="Saluz H.P."/>
            <person name="Saiz J.E."/>
            <person name="Saren A.-M."/>
            <person name="Schaefer M."/>
            <person name="Scharfe M."/>
            <person name="Schmidt E.R."/>
            <person name="Schneider C."/>
            <person name="Scholler P."/>
            <person name="Schwarz S."/>
            <person name="Soler-Mira A."/>
            <person name="Urrestarazu L.A."/>
            <person name="Verhasselt P."/>
            <person name="Vissers S."/>
            <person name="Voet M."/>
            <person name="Volckaert G."/>
            <person name="Wagner G."/>
            <person name="Wambutt R."/>
            <person name="Wedler E."/>
            <person name="Wedler H."/>
            <person name="Woelfl S."/>
            <person name="Harris D.E."/>
            <person name="Bowman S."/>
            <person name="Brown D."/>
            <person name="Churcher C.M."/>
            <person name="Connor R."/>
            <person name="Dedman K."/>
            <person name="Gentles S."/>
            <person name="Hamlin N."/>
            <person name="Hunt S."/>
            <person name="Jones L."/>
            <person name="McDonald S."/>
            <person name="Murphy L.D."/>
            <person name="Niblett D."/>
            <person name="Odell C."/>
            <person name="Oliver K."/>
            <person name="Rajandream M.A."/>
            <person name="Richards C."/>
            <person name="Shore L."/>
            <person name="Walsh S.V."/>
            <person name="Barrell B.G."/>
            <person name="Dietrich F.S."/>
            <person name="Mulligan J.T."/>
            <person name="Allen E."/>
            <person name="Araujo R."/>
            <person name="Aviles E."/>
            <person name="Berno A."/>
            <person name="Carpenter J."/>
            <person name="Chen E."/>
            <person name="Cherry J.M."/>
            <person name="Chung E."/>
            <person name="Duncan M."/>
            <person name="Hunicke-Smith S."/>
            <person name="Hyman R.W."/>
            <person name="Komp C."/>
            <person name="Lashkari D."/>
            <person name="Lew H."/>
            <person name="Lin D."/>
            <person name="Mosedale D."/>
            <person name="Nakahara K."/>
            <person name="Namath A."/>
            <person name="Oefner P."/>
            <person name="Oh C."/>
            <person name="Petel F.X."/>
            <person name="Roberts D."/>
            <person name="Schramm S."/>
            <person name="Schroeder M."/>
            <person name="Shogren T."/>
            <person name="Shroff N."/>
            <person name="Winant A."/>
            <person name="Yelton M.A."/>
            <person name="Botstein D."/>
            <person name="Davis R.W."/>
            <person name="Johnston M."/>
            <person name="Andrews S."/>
            <person name="Brinkman R."/>
            <person name="Cooper J."/>
            <person name="Ding H."/>
            <person name="Du Z."/>
            <person name="Favello A."/>
            <person name="Fulton L."/>
            <person name="Gattung S."/>
            <person name="Greco T."/>
            <person name="Hallsworth K."/>
            <person name="Hawkins J."/>
            <person name="Hillier L.W."/>
            <person name="Jier M."/>
            <person name="Johnson D."/>
            <person name="Johnston L."/>
            <person name="Kirsten J."/>
            <person name="Kucaba T."/>
            <person name="Langston Y."/>
            <person name="Latreille P."/>
            <person name="Le T."/>
            <person name="Mardis E."/>
            <person name="Menezes S."/>
            <person name="Miller N."/>
            <person name="Nhan M."/>
            <person name="Pauley A."/>
            <person name="Peluso D."/>
            <person name="Rifkin L."/>
            <person name="Riles L."/>
            <person name="Taich A."/>
            <person name="Trevaskis E."/>
            <person name="Vignati D."/>
            <person name="Wilcox L."/>
            <person name="Wohldman P."/>
            <person name="Vaudin M."/>
            <person name="Wilson R."/>
            <person name="Waterston R."/>
            <person name="Albermann K."/>
            <person name="Hani J."/>
            <person name="Heumann K."/>
            <person name="Kleine K."/>
            <person name="Mewes H.-W."/>
            <person name="Zollner A."/>
            <person name="Zaccaria P."/>
        </authorList>
    </citation>
    <scope>NUCLEOTIDE SEQUENCE [LARGE SCALE GENOMIC DNA]</scope>
    <source>
        <strain>ATCC 204508 / S288c</strain>
    </source>
</reference>
<reference key="4">
    <citation type="journal article" date="2014" name="G3 (Bethesda)">
        <title>The reference genome sequence of Saccharomyces cerevisiae: Then and now.</title>
        <authorList>
            <person name="Engel S.R."/>
            <person name="Dietrich F.S."/>
            <person name="Fisk D.G."/>
            <person name="Binkley G."/>
            <person name="Balakrishnan R."/>
            <person name="Costanzo M.C."/>
            <person name="Dwight S.S."/>
            <person name="Hitz B.C."/>
            <person name="Karra K."/>
            <person name="Nash R.S."/>
            <person name="Weng S."/>
            <person name="Wong E.D."/>
            <person name="Lloyd P."/>
            <person name="Skrzypek M.S."/>
            <person name="Miyasato S.R."/>
            <person name="Simison M."/>
            <person name="Cherry J.M."/>
        </authorList>
    </citation>
    <scope>GENOME REANNOTATION</scope>
    <scope>SEQUENCE REVISION TO 211-213</scope>
    <source>
        <strain>ATCC 204508 / S288c</strain>
    </source>
</reference>
<reference key="5">
    <citation type="journal article" date="1995" name="EMBO J.">
        <title>Yeast spindle pole body duplication gene MPS1 encodes an essential dual specificity protein kinase.</title>
        <authorList>
            <person name="Lauze E."/>
            <person name="Stoelcker B."/>
            <person name="Luca F.C."/>
            <person name="Weiss E."/>
            <person name="Schutz A.R."/>
            <person name="Winey M."/>
        </authorList>
    </citation>
    <scope>CHARACTERIZATION</scope>
    <scope>MUTAGENESIS OF ASP-580</scope>
</reference>
<reference key="6">
    <citation type="journal article" date="2001" name="J. Biol. Chem.">
        <title>Yeast Mps1p phosphorylates the spindle pole component Spc110p in the N-terminal domain.</title>
        <authorList>
            <person name="Friedman D.B."/>
            <person name="Kern J.W."/>
            <person name="Huneycutt B.J."/>
            <person name="Vinh D.B."/>
            <person name="Crawford D.K."/>
            <person name="Steiner E."/>
            <person name="Scheiltz D."/>
            <person name="Yates J. III"/>
            <person name="Resing K.A."/>
            <person name="Ahn N.G."/>
            <person name="Winey M."/>
            <person name="Davis T.N."/>
        </authorList>
    </citation>
    <scope>FUNCTION</scope>
    <scope>CATALYTIC ACTIVITY</scope>
</reference>
<reference key="7">
    <citation type="journal article" date="2009" name="J. Biol. Chem.">
        <title>Budding yeast centrosome duplication requires stabilization of Spc29 via Mps1-mediated phosphorylation.</title>
        <authorList>
            <person name="Holinger E.P."/>
            <person name="Old W.M."/>
            <person name="Giddings T.H. Jr."/>
            <person name="Wong C."/>
            <person name="Yates J.R. III"/>
            <person name="Winey M."/>
        </authorList>
    </citation>
    <scope>FUNCTION</scope>
    <scope>CATALYTIC ACTIVITY</scope>
</reference>
<reference key="8">
    <citation type="journal article" date="2012" name="Curr. Biol.">
        <title>Phosphoregulation of Spc105 by Mps1 and PP1 regulates Bub1 localization to kinetochores.</title>
        <authorList>
            <person name="London N."/>
            <person name="Ceto S."/>
            <person name="Ranish J.A."/>
            <person name="Biggins S."/>
        </authorList>
    </citation>
    <scope>FUNCTION</scope>
    <scope>CATALYTIC ACTIVITY</scope>
</reference>
<reference key="9">
    <citation type="journal article" date="2012" name="Nat. Cell Biol.">
        <title>Cnn1 inhibits the interactions between the KMN complexes of the yeast kinetochore.</title>
        <authorList>
            <person name="Bock L.J."/>
            <person name="Pagliuca C."/>
            <person name="Kobayashi N."/>
            <person name="Grove R.A."/>
            <person name="Oku Y."/>
            <person name="Shrestha K."/>
            <person name="Alfieri C."/>
            <person name="Golfieri C."/>
            <person name="Oldani A."/>
            <person name="Dal Maschio M."/>
            <person name="Bermejo R."/>
            <person name="Hazbun T.R."/>
            <person name="Tanaka T.U."/>
            <person name="De Wulf P."/>
        </authorList>
    </citation>
    <scope>FUNCTION</scope>
    <scope>CATALYTIC ACTIVITY</scope>
</reference>
<feature type="chain" id="PRO_0000086391" description="Serine/threonine-protein kinase MPS1">
    <location>
        <begin position="1"/>
        <end position="764"/>
    </location>
</feature>
<feature type="domain" description="Protein kinase" evidence="2">
    <location>
        <begin position="440"/>
        <end position="720"/>
    </location>
</feature>
<feature type="region of interest" description="Disordered" evidence="4">
    <location>
        <begin position="66"/>
        <end position="95"/>
    </location>
</feature>
<feature type="region of interest" description="Disordered" evidence="4">
    <location>
        <begin position="197"/>
        <end position="216"/>
    </location>
</feature>
<feature type="region of interest" description="Disordered" evidence="4">
    <location>
        <begin position="258"/>
        <end position="316"/>
    </location>
</feature>
<feature type="compositionally biased region" description="Low complexity" evidence="4">
    <location>
        <begin position="85"/>
        <end position="95"/>
    </location>
</feature>
<feature type="compositionally biased region" description="Basic and acidic residues" evidence="4">
    <location>
        <begin position="201"/>
        <end position="216"/>
    </location>
</feature>
<feature type="compositionally biased region" description="Low complexity" evidence="4">
    <location>
        <begin position="272"/>
        <end position="292"/>
    </location>
</feature>
<feature type="compositionally biased region" description="Low complexity" evidence="4">
    <location>
        <begin position="306"/>
        <end position="315"/>
    </location>
</feature>
<feature type="active site" description="Proton acceptor" evidence="2 3">
    <location>
        <position position="563"/>
    </location>
</feature>
<feature type="binding site" evidence="2">
    <location>
        <begin position="446"/>
        <end position="454"/>
    </location>
    <ligand>
        <name>ATP</name>
        <dbReference type="ChEBI" id="CHEBI:30616"/>
    </ligand>
</feature>
<feature type="binding site" evidence="2">
    <location>
        <position position="468"/>
    </location>
    <ligand>
        <name>ATP</name>
        <dbReference type="ChEBI" id="CHEBI:30616"/>
    </ligand>
</feature>
<feature type="mutagenesis site" description="Loss of activity." evidence="9">
    <original>D</original>
    <variation>A</variation>
    <location>
        <position position="580"/>
    </location>
</feature>
<feature type="sequence conflict" description="In Ref. 1; AAA88731." evidence="10" ref="1">
    <original>A</original>
    <variation>S</variation>
    <location>
        <position position="146"/>
    </location>
</feature>
<feature type="sequence conflict" description="In Ref. 2; CAA96461 and 3; CAA98587." evidence="10" ref="2 3">
    <original>TKR</original>
    <variation>RRE</variation>
    <location>
        <begin position="211"/>
        <end position="213"/>
    </location>
</feature>
<feature type="strand" evidence="11">
    <location>
        <begin position="159"/>
        <end position="161"/>
    </location>
</feature>
<dbReference type="EC" id="2.7.12.2" evidence="5 6 7 8"/>
<dbReference type="EMBL" id="L08909">
    <property type="protein sequence ID" value="AAA88731.1"/>
    <property type="molecule type" value="Genomic_DNA"/>
</dbReference>
<dbReference type="EMBL" id="Z71781">
    <property type="protein sequence ID" value="CAA96461.1"/>
    <property type="molecule type" value="Genomic_DNA"/>
</dbReference>
<dbReference type="EMBL" id="Z74076">
    <property type="protein sequence ID" value="CAA98587.1"/>
    <property type="molecule type" value="Genomic_DNA"/>
</dbReference>
<dbReference type="EMBL" id="BK006938">
    <property type="protein sequence ID" value="DAA11824.2"/>
    <property type="molecule type" value="Genomic_DNA"/>
</dbReference>
<dbReference type="PIR" id="S67561">
    <property type="entry name" value="S67561"/>
</dbReference>
<dbReference type="RefSeq" id="NP_010256.2">
    <property type="nucleotide sequence ID" value="NM_001180087.2"/>
</dbReference>
<dbReference type="PDB" id="8V10">
    <property type="method" value="X-ray"/>
    <property type="resolution" value="3.02 A"/>
    <property type="chains" value="B=136-171"/>
</dbReference>
<dbReference type="PDBsum" id="8V10"/>
<dbReference type="SMR" id="P54199"/>
<dbReference type="BioGRID" id="32028">
    <property type="interactions" value="637"/>
</dbReference>
<dbReference type="DIP" id="DIP-5897N"/>
<dbReference type="FunCoup" id="P54199">
    <property type="interactions" value="509"/>
</dbReference>
<dbReference type="IntAct" id="P54199">
    <property type="interactions" value="40"/>
</dbReference>
<dbReference type="MINT" id="P54199"/>
<dbReference type="STRING" id="4932.YDL028C"/>
<dbReference type="iPTMnet" id="P54199"/>
<dbReference type="PaxDb" id="4932-YDL028C"/>
<dbReference type="PeptideAtlas" id="P54199"/>
<dbReference type="EnsemblFungi" id="YDL028C_mRNA">
    <property type="protein sequence ID" value="YDL028C"/>
    <property type="gene ID" value="YDL028C"/>
</dbReference>
<dbReference type="GeneID" id="851533"/>
<dbReference type="KEGG" id="sce:YDL028C"/>
<dbReference type="AGR" id="SGD:S000002186"/>
<dbReference type="SGD" id="S000002186">
    <property type="gene designation" value="MPS1"/>
</dbReference>
<dbReference type="VEuPathDB" id="FungiDB:YDL028C"/>
<dbReference type="eggNOG" id="KOG0596">
    <property type="taxonomic scope" value="Eukaryota"/>
</dbReference>
<dbReference type="GeneTree" id="ENSGT00950000182984"/>
<dbReference type="HOGENOM" id="CLU_019372_0_0_1"/>
<dbReference type="InParanoid" id="P54199"/>
<dbReference type="OMA" id="YRETQIG"/>
<dbReference type="OrthoDB" id="20524at2759"/>
<dbReference type="BioCyc" id="YEAST:G3O-29454-MONOMER"/>
<dbReference type="BRENDA" id="2.7.12.1">
    <property type="organism ID" value="984"/>
</dbReference>
<dbReference type="BioGRID-ORCS" id="851533">
    <property type="hits" value="11 hits in 13 CRISPR screens"/>
</dbReference>
<dbReference type="CD-CODE" id="876000F7">
    <property type="entry name" value="Centrosome"/>
</dbReference>
<dbReference type="PRO" id="PR:P54199"/>
<dbReference type="Proteomes" id="UP000002311">
    <property type="component" value="Chromosome IV"/>
</dbReference>
<dbReference type="RNAct" id="P54199">
    <property type="molecule type" value="protein"/>
</dbReference>
<dbReference type="GO" id="GO:0000776">
    <property type="term" value="C:kinetochore"/>
    <property type="evidence" value="ECO:0000314"/>
    <property type="project" value="SGD"/>
</dbReference>
<dbReference type="GO" id="GO:0005634">
    <property type="term" value="C:nucleus"/>
    <property type="evidence" value="ECO:0000318"/>
    <property type="project" value="GO_Central"/>
</dbReference>
<dbReference type="GO" id="GO:0005777">
    <property type="term" value="C:peroxisome"/>
    <property type="evidence" value="ECO:0000314"/>
    <property type="project" value="SGD"/>
</dbReference>
<dbReference type="GO" id="GO:0005816">
    <property type="term" value="C:spindle pole body"/>
    <property type="evidence" value="ECO:0000314"/>
    <property type="project" value="SGD"/>
</dbReference>
<dbReference type="GO" id="GO:0005524">
    <property type="term" value="F:ATP binding"/>
    <property type="evidence" value="ECO:0007669"/>
    <property type="project" value="UniProtKB-KW"/>
</dbReference>
<dbReference type="GO" id="GO:0043515">
    <property type="term" value="F:kinetochore binding"/>
    <property type="evidence" value="ECO:0000314"/>
    <property type="project" value="SGD"/>
</dbReference>
<dbReference type="GO" id="GO:0004708">
    <property type="term" value="F:MAP kinase kinase activity"/>
    <property type="evidence" value="ECO:0007669"/>
    <property type="project" value="UniProtKB-EC"/>
</dbReference>
<dbReference type="GO" id="GO:0004672">
    <property type="term" value="F:protein kinase activity"/>
    <property type="evidence" value="ECO:0000314"/>
    <property type="project" value="SGD"/>
</dbReference>
<dbReference type="GO" id="GO:0106310">
    <property type="term" value="F:protein serine kinase activity"/>
    <property type="evidence" value="ECO:0007669"/>
    <property type="project" value="RHEA"/>
</dbReference>
<dbReference type="GO" id="GO:0004674">
    <property type="term" value="F:protein serine/threonine kinase activity"/>
    <property type="evidence" value="ECO:0000314"/>
    <property type="project" value="UniProtKB"/>
</dbReference>
<dbReference type="GO" id="GO:0004712">
    <property type="term" value="F:protein serine/threonine/tyrosine kinase activity"/>
    <property type="evidence" value="ECO:0000314"/>
    <property type="project" value="SGD"/>
</dbReference>
<dbReference type="GO" id="GO:0004713">
    <property type="term" value="F:protein tyrosine kinase activity"/>
    <property type="evidence" value="ECO:0007669"/>
    <property type="project" value="RHEA"/>
</dbReference>
<dbReference type="GO" id="GO:0007059">
    <property type="term" value="P:chromosome segregation"/>
    <property type="evidence" value="ECO:0000318"/>
    <property type="project" value="GO_Central"/>
</dbReference>
<dbReference type="GO" id="GO:0033316">
    <property type="term" value="P:meiotic spindle assembly checkpoint signaling"/>
    <property type="evidence" value="ECO:0000318"/>
    <property type="project" value="GO_Central"/>
</dbReference>
<dbReference type="GO" id="GO:0044779">
    <property type="term" value="P:meiotic spindle checkpoint signaling"/>
    <property type="evidence" value="ECO:0000316"/>
    <property type="project" value="SGD"/>
</dbReference>
<dbReference type="GO" id="GO:0007094">
    <property type="term" value="P:mitotic spindle assembly checkpoint signaling"/>
    <property type="evidence" value="ECO:0000315"/>
    <property type="project" value="SGD"/>
</dbReference>
<dbReference type="GO" id="GO:0034501">
    <property type="term" value="P:protein localization to kinetochore"/>
    <property type="evidence" value="ECO:0000316"/>
    <property type="project" value="SGD"/>
</dbReference>
<dbReference type="GO" id="GO:0051988">
    <property type="term" value="P:regulation of attachment of spindle microtubules to kinetochore"/>
    <property type="evidence" value="ECO:0000315"/>
    <property type="project" value="SGD"/>
</dbReference>
<dbReference type="GO" id="GO:0031134">
    <property type="term" value="P:sister chromatid biorientation"/>
    <property type="evidence" value="ECO:0000315"/>
    <property type="project" value="SGD"/>
</dbReference>
<dbReference type="GO" id="GO:0051225">
    <property type="term" value="P:spindle assembly"/>
    <property type="evidence" value="ECO:0000315"/>
    <property type="project" value="SGD"/>
</dbReference>
<dbReference type="GO" id="GO:0030474">
    <property type="term" value="P:spindle pole body duplication"/>
    <property type="evidence" value="ECO:0000315"/>
    <property type="project" value="SGD"/>
</dbReference>
<dbReference type="CDD" id="cd14131">
    <property type="entry name" value="PKc_Mps1"/>
    <property type="match status" value="1"/>
</dbReference>
<dbReference type="FunFam" id="1.10.510.10:FF:000377">
    <property type="entry name" value="Checkpoint protein kinase"/>
    <property type="match status" value="1"/>
</dbReference>
<dbReference type="FunFam" id="3.30.200.20:FF:000131">
    <property type="entry name" value="Dual specificity protein kinase TTK"/>
    <property type="match status" value="1"/>
</dbReference>
<dbReference type="Gene3D" id="3.30.200.20">
    <property type="entry name" value="Phosphorylase Kinase, domain 1"/>
    <property type="match status" value="1"/>
</dbReference>
<dbReference type="Gene3D" id="1.10.510.10">
    <property type="entry name" value="Transferase(Phosphotransferase) domain 1"/>
    <property type="match status" value="1"/>
</dbReference>
<dbReference type="InterPro" id="IPR011009">
    <property type="entry name" value="Kinase-like_dom_sf"/>
</dbReference>
<dbReference type="InterPro" id="IPR016242">
    <property type="entry name" value="Mps1"/>
</dbReference>
<dbReference type="InterPro" id="IPR027084">
    <property type="entry name" value="Mps1_cat"/>
</dbReference>
<dbReference type="InterPro" id="IPR000719">
    <property type="entry name" value="Prot_kinase_dom"/>
</dbReference>
<dbReference type="InterPro" id="IPR017441">
    <property type="entry name" value="Protein_kinase_ATP_BS"/>
</dbReference>
<dbReference type="InterPro" id="IPR008271">
    <property type="entry name" value="Ser/Thr_kinase_AS"/>
</dbReference>
<dbReference type="PANTHER" id="PTHR22974:SF21">
    <property type="entry name" value="DUAL SPECIFICITY PROTEIN KINASE TTK"/>
    <property type="match status" value="1"/>
</dbReference>
<dbReference type="PANTHER" id="PTHR22974">
    <property type="entry name" value="MIXED LINEAGE PROTEIN KINASE"/>
    <property type="match status" value="1"/>
</dbReference>
<dbReference type="Pfam" id="PF00069">
    <property type="entry name" value="Pkinase"/>
    <property type="match status" value="1"/>
</dbReference>
<dbReference type="PIRSF" id="PIRSF000611">
    <property type="entry name" value="Ser/Thr_PK_MPS1"/>
    <property type="match status" value="1"/>
</dbReference>
<dbReference type="SMART" id="SM00220">
    <property type="entry name" value="S_TKc"/>
    <property type="match status" value="1"/>
</dbReference>
<dbReference type="SUPFAM" id="SSF56112">
    <property type="entry name" value="Protein kinase-like (PK-like)"/>
    <property type="match status" value="1"/>
</dbReference>
<dbReference type="PROSITE" id="PS00107">
    <property type="entry name" value="PROTEIN_KINASE_ATP"/>
    <property type="match status" value="1"/>
</dbReference>
<dbReference type="PROSITE" id="PS50011">
    <property type="entry name" value="PROTEIN_KINASE_DOM"/>
    <property type="match status" value="1"/>
</dbReference>
<dbReference type="PROSITE" id="PS00108">
    <property type="entry name" value="PROTEIN_KINASE_ST"/>
    <property type="match status" value="1"/>
</dbReference>
<comment type="function">
    <text evidence="1 5 6 7 8">Involved in mitotic spindle assembly checkpoint signaling, a process that delays anaphase until chromosomes are bioriented on the spindle, and in the repair of incorrect mitotic kinetochore-spindle microtubule attachments (By similarity). Phosphorylates SPC105 on MELT motifs; phosphorylation is required for recruitment of the BUB1-BUB3 complex to kinetochores (PubMed:22521787). Phosphorylates CNN1, which contributes to the enrichment of CNN1 on anaphase kinetochores (PubMed:22561345). Implicated in spindle pole body (SPD) duplication. Phosphorylates the SPC29 and SPC110 spindle pole body components (PubMed:11278681, PubMed:19269975).</text>
</comment>
<comment type="catalytic activity">
    <reaction evidence="5 8">
        <text>L-seryl-[protein] + ATP = O-phospho-L-seryl-[protein] + ADP + H(+)</text>
        <dbReference type="Rhea" id="RHEA:17989"/>
        <dbReference type="Rhea" id="RHEA-COMP:9863"/>
        <dbReference type="Rhea" id="RHEA-COMP:11604"/>
        <dbReference type="ChEBI" id="CHEBI:15378"/>
        <dbReference type="ChEBI" id="CHEBI:29999"/>
        <dbReference type="ChEBI" id="CHEBI:30616"/>
        <dbReference type="ChEBI" id="CHEBI:83421"/>
        <dbReference type="ChEBI" id="CHEBI:456216"/>
        <dbReference type="EC" id="2.7.12.2"/>
    </reaction>
</comment>
<comment type="catalytic activity">
    <reaction evidence="5 6 8">
        <text>L-threonyl-[protein] + ATP = O-phospho-L-threonyl-[protein] + ADP + H(+)</text>
        <dbReference type="Rhea" id="RHEA:46608"/>
        <dbReference type="Rhea" id="RHEA-COMP:11060"/>
        <dbReference type="Rhea" id="RHEA-COMP:11605"/>
        <dbReference type="ChEBI" id="CHEBI:15378"/>
        <dbReference type="ChEBI" id="CHEBI:30013"/>
        <dbReference type="ChEBI" id="CHEBI:30616"/>
        <dbReference type="ChEBI" id="CHEBI:61977"/>
        <dbReference type="ChEBI" id="CHEBI:456216"/>
        <dbReference type="EC" id="2.7.12.2"/>
    </reaction>
</comment>
<comment type="catalytic activity">
    <reaction>
        <text>L-tyrosyl-[protein] + ATP = O-phospho-L-tyrosyl-[protein] + ADP + H(+)</text>
        <dbReference type="Rhea" id="RHEA:10596"/>
        <dbReference type="Rhea" id="RHEA-COMP:10136"/>
        <dbReference type="Rhea" id="RHEA-COMP:20101"/>
        <dbReference type="ChEBI" id="CHEBI:15378"/>
        <dbReference type="ChEBI" id="CHEBI:30616"/>
        <dbReference type="ChEBI" id="CHEBI:46858"/>
        <dbReference type="ChEBI" id="CHEBI:61978"/>
        <dbReference type="ChEBI" id="CHEBI:456216"/>
        <dbReference type="EC" id="2.7.12.2"/>
    </reaction>
</comment>
<comment type="interaction">
    <interactant intactId="EBI-11224">
        <id>P54199</id>
    </interactant>
    <interactant intactId="EBI-3508">
        <id>P29366</id>
        <label>BEM1</label>
    </interactant>
    <organismsDiffer>false</organismsDiffer>
    <experiments>3</experiments>
</comment>
<comment type="interaction">
    <interactant intactId="EBI-11224">
        <id>P54199</id>
    </interactant>
    <interactant intactId="EBI-25247">
        <id>P40460</id>
        <label>NDC80</label>
    </interactant>
    <organismsDiffer>false</organismsDiffer>
    <experiments>4</experiments>
</comment>
<comment type="interaction">
    <interactant intactId="EBI-11224">
        <id>P54199</id>
    </interactant>
    <interactant intactId="EBI-17313">
        <id>P32790</id>
        <label>SLA1</label>
    </interactant>
    <organismsDiffer>false</organismsDiffer>
    <experiments>2</experiments>
</comment>
<comment type="PTM">
    <text>Autophosphorylated.</text>
</comment>
<comment type="similarity">
    <text evidence="2">Belongs to the protein kinase superfamily. Ser/Thr protein kinase family.</text>
</comment>
<accession>P54199</accession>
<accession>D6VRW4</accession>
<sequence>MSTNSFHDYVDLKSRTNTRQFSDDEEFTTPPKLSNFGSALLSHTEKTSASEILSSHNNDKIANRLEEMDRSSSRSHPPPSMGNLTSGHTSTSSHSTLFGRYLRNNHQTSMTTMNTSDIEINVGNSLDKSFERIRNLRQNMKEDITAKYAERRSKRFLISNRTTKLGPAKRAMTLTNIFDEDVPNSPNQPINARETVELPLEDSHQTNFKETKRNTDYDSIDFGDLNPIQYIKKHNLPTSDLPLISQIYFDKQREENRQAALRKHSSRELLYKSRSSSSSLSSNNLLANKDNSITSNNGSQPRRKVSTGSSSSKSSIEIRRALKENIDTSNNSNFNSPIHKIYKGISRNKDSDSEKREVLRNISINANHADNLLQQENKRLKRSLDDAITNENINSKNLEVFYHRPAPKPPVTKKVEIVEPAKSASLSNNRNIITVNDSQYEKIELLGRGGSSRVYKVKGSGNRVYALKRVSFDAFDDSSIDGFKGEIELLEKLKDQKRVIQLLDYEMGDGLLYLIMECGDHDLSQILNQRSGMPLDFNFVRFYTKEMLLCIKVVHDAGIVHSDLKPANFVLVKGILKIIDFGIANAVPEHTVNIYRETQIGTPNYMAPEALVAMNYTQNSENQHEGNKWKVGRPSDMWSCGCIIYQMIYGKPPYGSFQGQNRLLAIMNPDVKIPFPEHTSNNEKIPKSAIELMKACLYRNPDKRWTVDKVLSSTFLQPFMISGSIMEDLIRNAVRYGSEKPHISQDDLNDVVDTVLRKFADYKI</sequence>
<organism>
    <name type="scientific">Saccharomyces cerevisiae (strain ATCC 204508 / S288c)</name>
    <name type="common">Baker's yeast</name>
    <dbReference type="NCBI Taxonomy" id="559292"/>
    <lineage>
        <taxon>Eukaryota</taxon>
        <taxon>Fungi</taxon>
        <taxon>Dikarya</taxon>
        <taxon>Ascomycota</taxon>
        <taxon>Saccharomycotina</taxon>
        <taxon>Saccharomycetes</taxon>
        <taxon>Saccharomycetales</taxon>
        <taxon>Saccharomycetaceae</taxon>
        <taxon>Saccharomyces</taxon>
    </lineage>
</organism>
<name>MPS1_YEAST</name>